<reference evidence="6" key="1">
    <citation type="journal article" date="2002" name="Nat. Genet.">
        <title>Insertional mutagenesis in zebrafish rapidly identifies genes essential for early vertebrate development.</title>
        <authorList>
            <person name="Golling G."/>
            <person name="Amsterdam A."/>
            <person name="Sun Z."/>
            <person name="Antonelli M."/>
            <person name="Maldonado E."/>
            <person name="Chen W."/>
            <person name="Burgess S."/>
            <person name="Haldi M."/>
            <person name="Artzt K."/>
            <person name="Farrington S."/>
            <person name="Lin S.-Y."/>
            <person name="Nissen R.M."/>
            <person name="Hopkins N."/>
        </authorList>
    </citation>
    <scope>NUCLEOTIDE SEQUENCE [LARGE SCALE MRNA]</scope>
    <scope>FUNCTION</scope>
    <scope>DISRUPTION PHENOTYPE</scope>
    <source>
        <tissue evidence="3">Embryo</tissue>
    </source>
</reference>
<reference evidence="5" key="2">
    <citation type="submission" date="2003-06" db="EMBL/GenBank/DDBJ databases">
        <authorList>
            <consortium name="NIH - Zebrafish Gene Collection (ZGC) project"/>
        </authorList>
    </citation>
    <scope>NUCLEOTIDE SEQUENCE [LARGE SCALE MRNA]</scope>
    <source>
        <tissue evidence="5">Kidney</tissue>
    </source>
</reference>
<feature type="chain" id="PRO_0000210305" description="Mitochondrial import inner membrane translocase subunit Tim23">
    <location>
        <begin position="1"/>
        <end position="208"/>
    </location>
</feature>
<feature type="transmembrane region" description="Helical" evidence="2">
    <location>
        <begin position="73"/>
        <end position="93"/>
    </location>
</feature>
<feature type="transmembrane region" description="Helical" evidence="2">
    <location>
        <begin position="125"/>
        <end position="145"/>
    </location>
</feature>
<feature type="transmembrane region" description="Helical" evidence="2">
    <location>
        <begin position="173"/>
        <end position="193"/>
    </location>
</feature>
<feature type="sequence conflict" description="In Ref. 1; AAM34675." evidence="4" ref="1">
    <original>S</original>
    <variation>N</variation>
    <location>
        <position position="4"/>
    </location>
</feature>
<feature type="sequence conflict" description="In Ref. 1; AAM34675." evidence="4" ref="1">
    <original>K</original>
    <variation>R</variation>
    <location>
        <position position="147"/>
    </location>
</feature>
<protein>
    <recommendedName>
        <fullName>Mitochondrial import inner membrane translocase subunit Tim23</fullName>
    </recommendedName>
</protein>
<keyword id="KW-0217">Developmental protein</keyword>
<keyword id="KW-0472">Membrane</keyword>
<keyword id="KW-0496">Mitochondrion</keyword>
<keyword id="KW-0999">Mitochondrion inner membrane</keyword>
<keyword id="KW-0653">Protein transport</keyword>
<keyword id="KW-1185">Reference proteome</keyword>
<keyword id="KW-0811">Translocation</keyword>
<keyword id="KW-0812">Transmembrane</keyword>
<keyword id="KW-1133">Transmembrane helix</keyword>
<keyword id="KW-0813">Transport</keyword>
<name>TIM23_DANRE</name>
<evidence type="ECO:0000250" key="1">
    <source>
        <dbReference type="UniProtKB" id="O14925"/>
    </source>
</evidence>
<evidence type="ECO:0000255" key="2"/>
<evidence type="ECO:0000269" key="3">
    <source>
    </source>
</evidence>
<evidence type="ECO:0000305" key="4"/>
<evidence type="ECO:0000312" key="5">
    <source>
        <dbReference type="EMBL" id="AAH53170.1"/>
    </source>
</evidence>
<evidence type="ECO:0000312" key="6">
    <source>
        <dbReference type="EMBL" id="AAM34675.1"/>
    </source>
</evidence>
<accession>Q7T2P6</accession>
<accession>Q8JHG5</accession>
<gene>
    <name type="primary">timm23</name>
</gene>
<sequence>MDNSTPPPGGFKGGLGSIFGGGTPEYSNTELSGVPLTGMSPLSPYLNVDPRYLIQDTDEFILPTGANKTRGRFELAFFTIGGCCITGAAFGTLNGLRMGLSETRDMPWSKPRNVQILNMVTRQGASWANTLGSVALLYSVFGVAIEKARGAEDDLNTVAAGTLTGMVFKSTGGLKGVARGGLIGLAMSGLYALYNNWDHLKGKSPSHY</sequence>
<dbReference type="EMBL" id="AF506231">
    <property type="protein sequence ID" value="AAM34675.1"/>
    <property type="molecule type" value="mRNA"/>
</dbReference>
<dbReference type="EMBL" id="BC053170">
    <property type="protein sequence ID" value="AAH53170.1"/>
    <property type="molecule type" value="mRNA"/>
</dbReference>
<dbReference type="SMR" id="Q7T2P6"/>
<dbReference type="FunCoup" id="Q7T2P6">
    <property type="interactions" value="873"/>
</dbReference>
<dbReference type="STRING" id="7955.ENSDARP00000096296"/>
<dbReference type="PaxDb" id="7955-ENSDARP00000096296"/>
<dbReference type="AGR" id="ZFIN:ZDB-GENE-020419-17"/>
<dbReference type="ZFIN" id="ZDB-GENE-020419-17">
    <property type="gene designation" value="timm23a"/>
</dbReference>
<dbReference type="eggNOG" id="KOG3324">
    <property type="taxonomic scope" value="Eukaryota"/>
</dbReference>
<dbReference type="InParanoid" id="Q7T2P6"/>
<dbReference type="PhylomeDB" id="Q7T2P6"/>
<dbReference type="PRO" id="PR:Q7T2P6"/>
<dbReference type="Proteomes" id="UP000000437">
    <property type="component" value="Unplaced"/>
</dbReference>
<dbReference type="GO" id="GO:0016020">
    <property type="term" value="C:membrane"/>
    <property type="evidence" value="ECO:0000304"/>
    <property type="project" value="UniProtKB"/>
</dbReference>
<dbReference type="GO" id="GO:0042719">
    <property type="term" value="C:mitochondrial intermembrane space protein transporter complex"/>
    <property type="evidence" value="ECO:0000304"/>
    <property type="project" value="UniProtKB"/>
</dbReference>
<dbReference type="GO" id="GO:0005744">
    <property type="term" value="C:TIM23 mitochondrial import inner membrane translocase complex"/>
    <property type="evidence" value="ECO:0000318"/>
    <property type="project" value="GO_Central"/>
</dbReference>
<dbReference type="GO" id="GO:0008320">
    <property type="term" value="F:protein transmembrane transporter activity"/>
    <property type="evidence" value="ECO:0000318"/>
    <property type="project" value="GO_Central"/>
</dbReference>
<dbReference type="GO" id="GO:0015450">
    <property type="term" value="F:protein-transporting ATPase activity"/>
    <property type="evidence" value="ECO:0000304"/>
    <property type="project" value="UniProtKB"/>
</dbReference>
<dbReference type="GO" id="GO:0006886">
    <property type="term" value="P:intracellular protein transport"/>
    <property type="evidence" value="ECO:0000304"/>
    <property type="project" value="UniProtKB"/>
</dbReference>
<dbReference type="GO" id="GO:0030150">
    <property type="term" value="P:protein import into mitochondrial matrix"/>
    <property type="evidence" value="ECO:0000318"/>
    <property type="project" value="GO_Central"/>
</dbReference>
<dbReference type="GO" id="GO:0045039">
    <property type="term" value="P:protein insertion into mitochondrial inner membrane"/>
    <property type="evidence" value="ECO:0000304"/>
    <property type="project" value="UniProtKB"/>
</dbReference>
<dbReference type="InterPro" id="IPR005681">
    <property type="entry name" value="Tim23"/>
</dbReference>
<dbReference type="InterPro" id="IPR045238">
    <property type="entry name" value="Tim23-like"/>
</dbReference>
<dbReference type="NCBIfam" id="TIGR00983">
    <property type="entry name" value="3a0801s02tim23"/>
    <property type="match status" value="1"/>
</dbReference>
<dbReference type="PANTHER" id="PTHR15371:SF39">
    <property type="entry name" value="MITOCHONDRIAL IMPORT INNER MEMBRANE TRANSLOCASE SUBUNIT TIM23"/>
    <property type="match status" value="1"/>
</dbReference>
<dbReference type="PANTHER" id="PTHR15371">
    <property type="entry name" value="TIM23"/>
    <property type="match status" value="1"/>
</dbReference>
<dbReference type="Pfam" id="PF02466">
    <property type="entry name" value="Tim17"/>
    <property type="match status" value="1"/>
</dbReference>
<comment type="function">
    <text evidence="1 3">Essential component of the TIM23 complex, a complex that mediates the translocation of transit peptide-containing proteins across the mitochondrial inner membrane (By similarity). Plays an essential role in early embryonic development.</text>
</comment>
<comment type="subunit">
    <text evidence="1">Component of the TIM23 complex at least composed of timm23, timm17 and timm50. The complex interacts with the timm44 component of the PAM complex (By similarity).</text>
</comment>
<comment type="subcellular location">
    <subcellularLocation>
        <location evidence="1">Mitochondrion inner membrane</location>
        <topology evidence="2">Multi-pass membrane protein</topology>
    </subcellularLocation>
</comment>
<comment type="disruption phenotype">
    <text evidence="3">Mutants show various developmental defects including reduced tail circulation, and smaller head, eye and body.</text>
</comment>
<comment type="similarity">
    <text evidence="4">Belongs to the Tim17/Tim22/Tim23 family.</text>
</comment>
<proteinExistence type="evidence at transcript level"/>
<organism evidence="5">
    <name type="scientific">Danio rerio</name>
    <name type="common">Zebrafish</name>
    <name type="synonym">Brachydanio rerio</name>
    <dbReference type="NCBI Taxonomy" id="7955"/>
    <lineage>
        <taxon>Eukaryota</taxon>
        <taxon>Metazoa</taxon>
        <taxon>Chordata</taxon>
        <taxon>Craniata</taxon>
        <taxon>Vertebrata</taxon>
        <taxon>Euteleostomi</taxon>
        <taxon>Actinopterygii</taxon>
        <taxon>Neopterygii</taxon>
        <taxon>Teleostei</taxon>
        <taxon>Ostariophysi</taxon>
        <taxon>Cypriniformes</taxon>
        <taxon>Danionidae</taxon>
        <taxon>Danioninae</taxon>
        <taxon>Danio</taxon>
    </lineage>
</organism>